<dbReference type="EC" id="6.3.5.2" evidence="1"/>
<dbReference type="EMBL" id="AM180088">
    <property type="protein sequence ID" value="CAJ51418.1"/>
    <property type="molecule type" value="Genomic_DNA"/>
</dbReference>
<dbReference type="RefSeq" id="WP_011570577.1">
    <property type="nucleotide sequence ID" value="NC_008212.1"/>
</dbReference>
<dbReference type="SMR" id="Q18KM8"/>
<dbReference type="STRING" id="362976.HQ_1289A"/>
<dbReference type="MEROPS" id="C26.A31"/>
<dbReference type="GeneID" id="4194070"/>
<dbReference type="KEGG" id="hwa:HQ_1289A"/>
<dbReference type="eggNOG" id="arCOG00087">
    <property type="taxonomic scope" value="Archaea"/>
</dbReference>
<dbReference type="HOGENOM" id="CLU_014340_1_4_2"/>
<dbReference type="UniPathway" id="UPA00189">
    <property type="reaction ID" value="UER00296"/>
</dbReference>
<dbReference type="Proteomes" id="UP000001975">
    <property type="component" value="Chromosome"/>
</dbReference>
<dbReference type="GO" id="GO:0005829">
    <property type="term" value="C:cytosol"/>
    <property type="evidence" value="ECO:0007669"/>
    <property type="project" value="TreeGrafter"/>
</dbReference>
<dbReference type="GO" id="GO:0005524">
    <property type="term" value="F:ATP binding"/>
    <property type="evidence" value="ECO:0007669"/>
    <property type="project" value="UniProtKB-KW"/>
</dbReference>
<dbReference type="GO" id="GO:0003921">
    <property type="term" value="F:GMP synthase activity"/>
    <property type="evidence" value="ECO:0007669"/>
    <property type="project" value="TreeGrafter"/>
</dbReference>
<dbReference type="CDD" id="cd01742">
    <property type="entry name" value="GATase1_GMP_Synthase"/>
    <property type="match status" value="1"/>
</dbReference>
<dbReference type="FunFam" id="3.40.50.880:FF:000047">
    <property type="entry name" value="GMP synthase [glutamine-hydrolyzing] subunit A"/>
    <property type="match status" value="1"/>
</dbReference>
<dbReference type="Gene3D" id="3.40.50.880">
    <property type="match status" value="1"/>
</dbReference>
<dbReference type="HAMAP" id="MF_01510">
    <property type="entry name" value="GMP_synthase_A"/>
    <property type="match status" value="1"/>
</dbReference>
<dbReference type="InterPro" id="IPR029062">
    <property type="entry name" value="Class_I_gatase-like"/>
</dbReference>
<dbReference type="InterPro" id="IPR017926">
    <property type="entry name" value="GATASE"/>
</dbReference>
<dbReference type="InterPro" id="IPR004739">
    <property type="entry name" value="GMP_synth_GATase"/>
</dbReference>
<dbReference type="InterPro" id="IPR023686">
    <property type="entry name" value="GMP_synthase_A"/>
</dbReference>
<dbReference type="NCBIfam" id="TIGR00888">
    <property type="entry name" value="guaA_Nterm"/>
    <property type="match status" value="1"/>
</dbReference>
<dbReference type="NCBIfam" id="NF001975">
    <property type="entry name" value="PRK00758.1"/>
    <property type="match status" value="1"/>
</dbReference>
<dbReference type="PANTHER" id="PTHR11922:SF2">
    <property type="entry name" value="GMP SYNTHASE [GLUTAMINE-HYDROLYZING]"/>
    <property type="match status" value="1"/>
</dbReference>
<dbReference type="PANTHER" id="PTHR11922">
    <property type="entry name" value="GMP SYNTHASE-RELATED"/>
    <property type="match status" value="1"/>
</dbReference>
<dbReference type="Pfam" id="PF00117">
    <property type="entry name" value="GATase"/>
    <property type="match status" value="1"/>
</dbReference>
<dbReference type="PRINTS" id="PR00097">
    <property type="entry name" value="ANTSNTHASEII"/>
</dbReference>
<dbReference type="PRINTS" id="PR00096">
    <property type="entry name" value="GATASE"/>
</dbReference>
<dbReference type="SUPFAM" id="SSF52317">
    <property type="entry name" value="Class I glutamine amidotransferase-like"/>
    <property type="match status" value="1"/>
</dbReference>
<dbReference type="PROSITE" id="PS51273">
    <property type="entry name" value="GATASE_TYPE_1"/>
    <property type="match status" value="1"/>
</dbReference>
<evidence type="ECO:0000255" key="1">
    <source>
        <dbReference type="HAMAP-Rule" id="MF_01510"/>
    </source>
</evidence>
<keyword id="KW-0067">ATP-binding</keyword>
<keyword id="KW-0315">Glutamine amidotransferase</keyword>
<keyword id="KW-0332">GMP biosynthesis</keyword>
<keyword id="KW-0436">Ligase</keyword>
<keyword id="KW-0547">Nucleotide-binding</keyword>
<keyword id="KW-0658">Purine biosynthesis</keyword>
<keyword id="KW-1185">Reference proteome</keyword>
<proteinExistence type="inferred from homology"/>
<sequence length="184" mass="20213">MTHIAVIDNHGQFTHLEQRALRDLGVDVELVDNTTSPEQLIQTADGLVLSGGPDIDRVGNCPEYLELDIPILGICLGMQLLANELGGSVAAGDYGGYADVDIEILDDTDPLIGSLAPETRVWASHADEVKSVPEGFERTARSDVCRIEAMSNRDQERYGVQWHPEVAHTERGEEVFKNFIARCQ</sequence>
<protein>
    <recommendedName>
        <fullName evidence="1">GMP synthase [glutamine-hydrolyzing] subunit A</fullName>
        <ecNumber evidence="1">6.3.5.2</ecNumber>
    </recommendedName>
    <alternativeName>
        <fullName evidence="1">Glutamine amidotransferase</fullName>
    </alternativeName>
</protein>
<reference key="1">
    <citation type="journal article" date="2006" name="BMC Genomics">
        <title>The genome of the square archaeon Haloquadratum walsbyi: life at the limits of water activity.</title>
        <authorList>
            <person name="Bolhuis H."/>
            <person name="Palm P."/>
            <person name="Wende A."/>
            <person name="Falb M."/>
            <person name="Rampp M."/>
            <person name="Rodriguez-Valera F."/>
            <person name="Pfeiffer F."/>
            <person name="Oesterhelt D."/>
        </authorList>
    </citation>
    <scope>NUCLEOTIDE SEQUENCE [LARGE SCALE GENOMIC DNA]</scope>
    <source>
        <strain>DSM 16790 / HBSQ001</strain>
    </source>
</reference>
<name>GUAAA_HALWD</name>
<organism>
    <name type="scientific">Haloquadratum walsbyi (strain DSM 16790 / HBSQ001)</name>
    <dbReference type="NCBI Taxonomy" id="362976"/>
    <lineage>
        <taxon>Archaea</taxon>
        <taxon>Methanobacteriati</taxon>
        <taxon>Methanobacteriota</taxon>
        <taxon>Stenosarchaea group</taxon>
        <taxon>Halobacteria</taxon>
        <taxon>Halobacteriales</taxon>
        <taxon>Haloferacaceae</taxon>
        <taxon>Haloquadratum</taxon>
    </lineage>
</organism>
<feature type="chain" id="PRO_0000292193" description="GMP synthase [glutamine-hydrolyzing] subunit A">
    <location>
        <begin position="1"/>
        <end position="184"/>
    </location>
</feature>
<feature type="domain" description="Glutamine amidotransferase type-1" evidence="1">
    <location>
        <begin position="3"/>
        <end position="184"/>
    </location>
</feature>
<feature type="active site" description="Nucleophile" evidence="1">
    <location>
        <position position="75"/>
    </location>
</feature>
<feature type="active site" evidence="1">
    <location>
        <position position="163"/>
    </location>
</feature>
<feature type="active site" evidence="1">
    <location>
        <position position="165"/>
    </location>
</feature>
<accession>Q18KM8</accession>
<comment type="function">
    <text evidence="1">Catalyzes the synthesis of GMP from XMP.</text>
</comment>
<comment type="catalytic activity">
    <reaction evidence="1">
        <text>XMP + L-glutamine + ATP + H2O = GMP + L-glutamate + AMP + diphosphate + 2 H(+)</text>
        <dbReference type="Rhea" id="RHEA:11680"/>
        <dbReference type="ChEBI" id="CHEBI:15377"/>
        <dbReference type="ChEBI" id="CHEBI:15378"/>
        <dbReference type="ChEBI" id="CHEBI:29985"/>
        <dbReference type="ChEBI" id="CHEBI:30616"/>
        <dbReference type="ChEBI" id="CHEBI:33019"/>
        <dbReference type="ChEBI" id="CHEBI:57464"/>
        <dbReference type="ChEBI" id="CHEBI:58115"/>
        <dbReference type="ChEBI" id="CHEBI:58359"/>
        <dbReference type="ChEBI" id="CHEBI:456215"/>
        <dbReference type="EC" id="6.3.5.2"/>
    </reaction>
</comment>
<comment type="pathway">
    <text evidence="1">Purine metabolism; GMP biosynthesis; GMP from XMP (L-Gln route): step 1/1.</text>
</comment>
<comment type="subunit">
    <text evidence="1">Heterodimer composed of a glutamine amidotransferase subunit (A) and a GMP-binding subunit (B).</text>
</comment>
<gene>
    <name evidence="1" type="primary">guaAA</name>
    <name type="ordered locus">HQ_1289A</name>
</gene>